<comment type="function">
    <text evidence="1">The enzymes which catalyze the reversible phosphorolysis of pyrimidine nucleosides are involved in the degradation of these compounds and in their utilization as carbon and energy sources, or in the rescue of pyrimidine bases for nucleotide synthesis.</text>
</comment>
<comment type="catalytic activity">
    <reaction evidence="1">
        <text>thymidine + phosphate = 2-deoxy-alpha-D-ribose 1-phosphate + thymine</text>
        <dbReference type="Rhea" id="RHEA:16037"/>
        <dbReference type="ChEBI" id="CHEBI:17748"/>
        <dbReference type="ChEBI" id="CHEBI:17821"/>
        <dbReference type="ChEBI" id="CHEBI:43474"/>
        <dbReference type="ChEBI" id="CHEBI:57259"/>
        <dbReference type="EC" id="2.4.2.4"/>
    </reaction>
</comment>
<comment type="pathway">
    <text evidence="1">Pyrimidine metabolism; dTMP biosynthesis via salvage pathway; dTMP from thymine: step 1/2.</text>
</comment>
<comment type="subunit">
    <text evidence="1">Homodimer.</text>
</comment>
<comment type="similarity">
    <text evidence="1">Belongs to the thymidine/pyrimidine-nucleoside phosphorylase family.</text>
</comment>
<name>TYPH_SALPA</name>
<reference key="1">
    <citation type="journal article" date="2004" name="Nat. Genet.">
        <title>Comparison of genome degradation in Paratyphi A and Typhi, human-restricted serovars of Salmonella enterica that cause typhoid.</title>
        <authorList>
            <person name="McClelland M."/>
            <person name="Sanderson K.E."/>
            <person name="Clifton S.W."/>
            <person name="Latreille P."/>
            <person name="Porwollik S."/>
            <person name="Sabo A."/>
            <person name="Meyer R."/>
            <person name="Bieri T."/>
            <person name="Ozersky P."/>
            <person name="McLellan M."/>
            <person name="Harkins C.R."/>
            <person name="Wang C."/>
            <person name="Nguyen C."/>
            <person name="Berghoff A."/>
            <person name="Elliott G."/>
            <person name="Kohlberg S."/>
            <person name="Strong C."/>
            <person name="Du F."/>
            <person name="Carter J."/>
            <person name="Kremizki C."/>
            <person name="Layman D."/>
            <person name="Leonard S."/>
            <person name="Sun H."/>
            <person name="Fulton L."/>
            <person name="Nash W."/>
            <person name="Miner T."/>
            <person name="Minx P."/>
            <person name="Delehaunty K."/>
            <person name="Fronick C."/>
            <person name="Magrini V."/>
            <person name="Nhan M."/>
            <person name="Warren W."/>
            <person name="Florea L."/>
            <person name="Spieth J."/>
            <person name="Wilson R.K."/>
        </authorList>
    </citation>
    <scope>NUCLEOTIDE SEQUENCE [LARGE SCALE GENOMIC DNA]</scope>
    <source>
        <strain>ATCC 9150 / SARB42</strain>
    </source>
</reference>
<sequence>MFLAQEIIRKKRDGHALSDEEIRFFINGIRDNTISEGQIAALAMTIFFHDMTMPERVSLTMAMRDSGTVLDWKSLNLNGPIVDKHSTGGVGDVTSLMLGPMVAACGGYVPMISGRGLGHTGGTLDKLEAIPGFDIFPDDNRFREIIQDVGVAIIGQTSSLAPADKRFYATRDITATVDSIPLITGSILAKKLAEGLDALVMDVKVGSGAFMPTYELSEALAEAIVGVANGAGVRTTALLTDMNQVLASSAGNAVEVREAVQFLTGEYRNPRLFDVTMALCVEMLISGNLAKDDAEARAKLQAVLDNGKAAEVFGRMVAAQKGPSDFVENYDKYLPTAMLSKAVYADTEGFISAMDTRALGMAVVSMGGGRRQASDTIDYSVGFTDMARLGDSIDGQRPLAVIHAKDEASWQEAAKAVKAAIILDDKAPASTPSVYRRITE</sequence>
<dbReference type="EC" id="2.4.2.4" evidence="1"/>
<dbReference type="EMBL" id="CP000026">
    <property type="protein sequence ID" value="AAV80105.1"/>
    <property type="molecule type" value="Genomic_DNA"/>
</dbReference>
<dbReference type="RefSeq" id="WP_000477835.1">
    <property type="nucleotide sequence ID" value="NC_006511.1"/>
</dbReference>
<dbReference type="SMR" id="Q5PK22"/>
<dbReference type="KEGG" id="spt:SPA4382"/>
<dbReference type="HOGENOM" id="CLU_025040_0_1_6"/>
<dbReference type="UniPathway" id="UPA00578">
    <property type="reaction ID" value="UER00638"/>
</dbReference>
<dbReference type="Proteomes" id="UP000008185">
    <property type="component" value="Chromosome"/>
</dbReference>
<dbReference type="GO" id="GO:0005829">
    <property type="term" value="C:cytosol"/>
    <property type="evidence" value="ECO:0007669"/>
    <property type="project" value="TreeGrafter"/>
</dbReference>
<dbReference type="GO" id="GO:0004645">
    <property type="term" value="F:1,4-alpha-oligoglucan phosphorylase activity"/>
    <property type="evidence" value="ECO:0007669"/>
    <property type="project" value="InterPro"/>
</dbReference>
<dbReference type="GO" id="GO:0009032">
    <property type="term" value="F:thymidine phosphorylase activity"/>
    <property type="evidence" value="ECO:0007669"/>
    <property type="project" value="UniProtKB-UniRule"/>
</dbReference>
<dbReference type="GO" id="GO:0006206">
    <property type="term" value="P:pyrimidine nucleobase metabolic process"/>
    <property type="evidence" value="ECO:0007669"/>
    <property type="project" value="InterPro"/>
</dbReference>
<dbReference type="GO" id="GO:0046104">
    <property type="term" value="P:thymidine metabolic process"/>
    <property type="evidence" value="ECO:0007669"/>
    <property type="project" value="UniProtKB-UniRule"/>
</dbReference>
<dbReference type="FunFam" id="3.40.1030.10:FF:000001">
    <property type="entry name" value="Thymidine phosphorylase"/>
    <property type="match status" value="1"/>
</dbReference>
<dbReference type="FunFam" id="3.90.1170.30:FF:000001">
    <property type="entry name" value="Thymidine phosphorylase"/>
    <property type="match status" value="1"/>
</dbReference>
<dbReference type="Gene3D" id="3.40.1030.10">
    <property type="entry name" value="Nucleoside phosphorylase/phosphoribosyltransferase catalytic domain"/>
    <property type="match status" value="1"/>
</dbReference>
<dbReference type="Gene3D" id="3.90.1170.30">
    <property type="entry name" value="Pyrimidine nucleoside phosphorylase-like, C-terminal domain"/>
    <property type="match status" value="1"/>
</dbReference>
<dbReference type="Gene3D" id="1.20.970.10">
    <property type="entry name" value="Transferase, Pyrimidine Nucleoside Phosphorylase, Chain C"/>
    <property type="match status" value="1"/>
</dbReference>
<dbReference type="HAMAP" id="MF_01628">
    <property type="entry name" value="Thymid_phosp"/>
    <property type="match status" value="1"/>
</dbReference>
<dbReference type="InterPro" id="IPR000312">
    <property type="entry name" value="Glycosyl_Trfase_fam3"/>
</dbReference>
<dbReference type="InterPro" id="IPR017459">
    <property type="entry name" value="Glycosyl_Trfase_fam3_N_dom"/>
</dbReference>
<dbReference type="InterPro" id="IPR036320">
    <property type="entry name" value="Glycosyl_Trfase_fam3_N_dom_sf"/>
</dbReference>
<dbReference type="InterPro" id="IPR035902">
    <property type="entry name" value="Nuc_phospho_transferase"/>
</dbReference>
<dbReference type="InterPro" id="IPR036566">
    <property type="entry name" value="PYNP-like_C_sf"/>
</dbReference>
<dbReference type="InterPro" id="IPR013102">
    <property type="entry name" value="PYNP_C"/>
</dbReference>
<dbReference type="InterPro" id="IPR018090">
    <property type="entry name" value="Pyrmidine_PPas_bac/euk"/>
</dbReference>
<dbReference type="InterPro" id="IPR017872">
    <property type="entry name" value="Pyrmidine_PPase_CS"/>
</dbReference>
<dbReference type="InterPro" id="IPR000053">
    <property type="entry name" value="Thymidine/pyrmidine_PPase"/>
</dbReference>
<dbReference type="InterPro" id="IPR013465">
    <property type="entry name" value="Thymidine_Pase"/>
</dbReference>
<dbReference type="NCBIfam" id="NF004490">
    <property type="entry name" value="PRK05820.1"/>
    <property type="match status" value="1"/>
</dbReference>
<dbReference type="NCBIfam" id="TIGR02643">
    <property type="entry name" value="T_phosphoryl"/>
    <property type="match status" value="1"/>
</dbReference>
<dbReference type="NCBIfam" id="TIGR02644">
    <property type="entry name" value="Y_phosphoryl"/>
    <property type="match status" value="1"/>
</dbReference>
<dbReference type="PANTHER" id="PTHR10515">
    <property type="entry name" value="THYMIDINE PHOSPHORYLASE"/>
    <property type="match status" value="1"/>
</dbReference>
<dbReference type="PANTHER" id="PTHR10515:SF0">
    <property type="entry name" value="THYMIDINE PHOSPHORYLASE"/>
    <property type="match status" value="1"/>
</dbReference>
<dbReference type="Pfam" id="PF02885">
    <property type="entry name" value="Glycos_trans_3N"/>
    <property type="match status" value="1"/>
</dbReference>
<dbReference type="Pfam" id="PF00591">
    <property type="entry name" value="Glycos_transf_3"/>
    <property type="match status" value="1"/>
</dbReference>
<dbReference type="Pfam" id="PF07831">
    <property type="entry name" value="PYNP_C"/>
    <property type="match status" value="1"/>
</dbReference>
<dbReference type="PIRSF" id="PIRSF000478">
    <property type="entry name" value="TP_PyNP"/>
    <property type="match status" value="1"/>
</dbReference>
<dbReference type="SMART" id="SM00941">
    <property type="entry name" value="PYNP_C"/>
    <property type="match status" value="1"/>
</dbReference>
<dbReference type="SUPFAM" id="SSF52418">
    <property type="entry name" value="Nucleoside phosphorylase/phosphoribosyltransferase catalytic domain"/>
    <property type="match status" value="1"/>
</dbReference>
<dbReference type="SUPFAM" id="SSF47648">
    <property type="entry name" value="Nucleoside phosphorylase/phosphoribosyltransferase N-terminal domain"/>
    <property type="match status" value="1"/>
</dbReference>
<dbReference type="SUPFAM" id="SSF54680">
    <property type="entry name" value="Pyrimidine nucleoside phosphorylase C-terminal domain"/>
    <property type="match status" value="1"/>
</dbReference>
<dbReference type="PROSITE" id="PS00647">
    <property type="entry name" value="THYMID_PHOSPHORYLASE"/>
    <property type="match status" value="1"/>
</dbReference>
<keyword id="KW-0328">Glycosyltransferase</keyword>
<keyword id="KW-0808">Transferase</keyword>
<organism>
    <name type="scientific">Salmonella paratyphi A (strain ATCC 9150 / SARB42)</name>
    <dbReference type="NCBI Taxonomy" id="295319"/>
    <lineage>
        <taxon>Bacteria</taxon>
        <taxon>Pseudomonadati</taxon>
        <taxon>Pseudomonadota</taxon>
        <taxon>Gammaproteobacteria</taxon>
        <taxon>Enterobacterales</taxon>
        <taxon>Enterobacteriaceae</taxon>
        <taxon>Salmonella</taxon>
    </lineage>
</organism>
<gene>
    <name evidence="1" type="primary">deoA</name>
    <name type="ordered locus">SPA4382</name>
</gene>
<proteinExistence type="inferred from homology"/>
<feature type="chain" id="PRO_0000059062" description="Thymidine phosphorylase">
    <location>
        <begin position="1"/>
        <end position="440"/>
    </location>
</feature>
<evidence type="ECO:0000255" key="1">
    <source>
        <dbReference type="HAMAP-Rule" id="MF_01628"/>
    </source>
</evidence>
<protein>
    <recommendedName>
        <fullName evidence="1">Thymidine phosphorylase</fullName>
        <ecNumber evidence="1">2.4.2.4</ecNumber>
    </recommendedName>
    <alternativeName>
        <fullName evidence="1">TdRPase</fullName>
    </alternativeName>
</protein>
<accession>Q5PK22</accession>